<name>MOAA_PHOLL</name>
<feature type="chain" id="PRO_1000054210" description="GTP 3',8-cyclase">
    <location>
        <begin position="1"/>
        <end position="327"/>
    </location>
</feature>
<feature type="domain" description="Radical SAM core" evidence="2">
    <location>
        <begin position="8"/>
        <end position="232"/>
    </location>
</feature>
<feature type="binding site" evidence="1">
    <location>
        <position position="17"/>
    </location>
    <ligand>
        <name>GTP</name>
        <dbReference type="ChEBI" id="CHEBI:37565"/>
    </ligand>
</feature>
<feature type="binding site" evidence="1">
    <location>
        <position position="24"/>
    </location>
    <ligand>
        <name>[4Fe-4S] cluster</name>
        <dbReference type="ChEBI" id="CHEBI:49883"/>
        <label>1</label>
        <note>4Fe-4S-S-AdoMet</note>
    </ligand>
</feature>
<feature type="binding site" evidence="1">
    <location>
        <position position="28"/>
    </location>
    <ligand>
        <name>[4Fe-4S] cluster</name>
        <dbReference type="ChEBI" id="CHEBI:49883"/>
        <label>1</label>
        <note>4Fe-4S-S-AdoMet</note>
    </ligand>
</feature>
<feature type="binding site" evidence="1">
    <location>
        <position position="30"/>
    </location>
    <ligand>
        <name>S-adenosyl-L-methionine</name>
        <dbReference type="ChEBI" id="CHEBI:59789"/>
    </ligand>
</feature>
<feature type="binding site" evidence="1">
    <location>
        <position position="31"/>
    </location>
    <ligand>
        <name>[4Fe-4S] cluster</name>
        <dbReference type="ChEBI" id="CHEBI:49883"/>
        <label>1</label>
        <note>4Fe-4S-S-AdoMet</note>
    </ligand>
</feature>
<feature type="binding site" evidence="1">
    <location>
        <position position="66"/>
    </location>
    <ligand>
        <name>GTP</name>
        <dbReference type="ChEBI" id="CHEBI:37565"/>
    </ligand>
</feature>
<feature type="binding site" evidence="1">
    <location>
        <position position="70"/>
    </location>
    <ligand>
        <name>S-adenosyl-L-methionine</name>
        <dbReference type="ChEBI" id="CHEBI:59789"/>
    </ligand>
</feature>
<feature type="binding site" evidence="1">
    <location>
        <position position="97"/>
    </location>
    <ligand>
        <name>GTP</name>
        <dbReference type="ChEBI" id="CHEBI:37565"/>
    </ligand>
</feature>
<feature type="binding site" evidence="1">
    <location>
        <position position="121"/>
    </location>
    <ligand>
        <name>S-adenosyl-L-methionine</name>
        <dbReference type="ChEBI" id="CHEBI:59789"/>
    </ligand>
</feature>
<feature type="binding site" evidence="1">
    <location>
        <position position="158"/>
    </location>
    <ligand>
        <name>GTP</name>
        <dbReference type="ChEBI" id="CHEBI:37565"/>
    </ligand>
</feature>
<feature type="binding site" evidence="1">
    <location>
        <position position="192"/>
    </location>
    <ligand>
        <name>S-adenosyl-L-methionine</name>
        <dbReference type="ChEBI" id="CHEBI:59789"/>
    </ligand>
</feature>
<feature type="binding site" evidence="1">
    <location>
        <position position="255"/>
    </location>
    <ligand>
        <name>[4Fe-4S] cluster</name>
        <dbReference type="ChEBI" id="CHEBI:49883"/>
        <label>2</label>
        <note>4Fe-4S-substrate</note>
    </ligand>
</feature>
<feature type="binding site" evidence="1">
    <location>
        <position position="258"/>
    </location>
    <ligand>
        <name>[4Fe-4S] cluster</name>
        <dbReference type="ChEBI" id="CHEBI:49883"/>
        <label>2</label>
        <note>4Fe-4S-substrate</note>
    </ligand>
</feature>
<feature type="binding site" evidence="1">
    <location>
        <begin position="260"/>
        <end position="262"/>
    </location>
    <ligand>
        <name>GTP</name>
        <dbReference type="ChEBI" id="CHEBI:37565"/>
    </ligand>
</feature>
<feature type="binding site" evidence="1">
    <location>
        <position position="272"/>
    </location>
    <ligand>
        <name>[4Fe-4S] cluster</name>
        <dbReference type="ChEBI" id="CHEBI:49883"/>
        <label>2</label>
        <note>4Fe-4S-substrate</note>
    </ligand>
</feature>
<protein>
    <recommendedName>
        <fullName evidence="1">GTP 3',8-cyclase</fullName>
        <ecNumber evidence="1">4.1.99.22</ecNumber>
    </recommendedName>
    <alternativeName>
        <fullName evidence="1">Molybdenum cofactor biosynthesis protein A</fullName>
    </alternativeName>
</protein>
<accession>Q7N6P6</accession>
<reference key="1">
    <citation type="journal article" date="2003" name="Nat. Biotechnol.">
        <title>The genome sequence of the entomopathogenic bacterium Photorhabdus luminescens.</title>
        <authorList>
            <person name="Duchaud E."/>
            <person name="Rusniok C."/>
            <person name="Frangeul L."/>
            <person name="Buchrieser C."/>
            <person name="Givaudan A."/>
            <person name="Taourit S."/>
            <person name="Bocs S."/>
            <person name="Boursaux-Eude C."/>
            <person name="Chandler M."/>
            <person name="Charles J.-F."/>
            <person name="Dassa E."/>
            <person name="Derose R."/>
            <person name="Derzelle S."/>
            <person name="Freyssinet G."/>
            <person name="Gaudriault S."/>
            <person name="Medigue C."/>
            <person name="Lanois A."/>
            <person name="Powell K."/>
            <person name="Siguier P."/>
            <person name="Vincent R."/>
            <person name="Wingate V."/>
            <person name="Zouine M."/>
            <person name="Glaser P."/>
            <person name="Boemare N."/>
            <person name="Danchin A."/>
            <person name="Kunst F."/>
        </authorList>
    </citation>
    <scope>NUCLEOTIDE SEQUENCE [LARGE SCALE GENOMIC DNA]</scope>
    <source>
        <strain>DSM 15139 / CIP 105565 / TT01</strain>
    </source>
</reference>
<keyword id="KW-0004">4Fe-4S</keyword>
<keyword id="KW-0342">GTP-binding</keyword>
<keyword id="KW-0408">Iron</keyword>
<keyword id="KW-0411">Iron-sulfur</keyword>
<keyword id="KW-0456">Lyase</keyword>
<keyword id="KW-0479">Metal-binding</keyword>
<keyword id="KW-0501">Molybdenum cofactor biosynthesis</keyword>
<keyword id="KW-0547">Nucleotide-binding</keyword>
<keyword id="KW-1185">Reference proteome</keyword>
<keyword id="KW-0949">S-adenosyl-L-methionine</keyword>
<sequence>MVKQLTDAFARKFYYLRLSITDVCNFRCTYCLPDGYKPRGHHSFLTLPEIRLVGRAFADLGTEKIRLTGGEPTMRRDFTDIISVIRENKLIKTLAVTTNGYRMERDIAKWKEAGLTAVNVSMDSLDPRQFHAITGQDKFFQVMRGIDAAFAVGFSKVKVNVVLMKNVNDISLSAFLHWIKDRPIQLRFIELMETGDGGEMFRQYHISGEIIRERLLLDGWHLLQRSRSDGPAQVFSHPDYQGEVGLIMPYEKNFCQSCNRLRVSSIGHLHLCLFGEQGIPLRDLLASEKQLDDLKLRIQDGLRHKRETHFLHQGDSGITPNLSVIGG</sequence>
<comment type="function">
    <text evidence="1">Catalyzes the cyclization of GTP to (8S)-3',8-cyclo-7,8-dihydroguanosine 5'-triphosphate.</text>
</comment>
<comment type="catalytic activity">
    <reaction evidence="1">
        <text>GTP + AH2 + S-adenosyl-L-methionine = (8S)-3',8-cyclo-7,8-dihydroguanosine 5'-triphosphate + 5'-deoxyadenosine + L-methionine + A + H(+)</text>
        <dbReference type="Rhea" id="RHEA:49576"/>
        <dbReference type="ChEBI" id="CHEBI:13193"/>
        <dbReference type="ChEBI" id="CHEBI:15378"/>
        <dbReference type="ChEBI" id="CHEBI:17319"/>
        <dbReference type="ChEBI" id="CHEBI:17499"/>
        <dbReference type="ChEBI" id="CHEBI:37565"/>
        <dbReference type="ChEBI" id="CHEBI:57844"/>
        <dbReference type="ChEBI" id="CHEBI:59789"/>
        <dbReference type="ChEBI" id="CHEBI:131766"/>
        <dbReference type="EC" id="4.1.99.22"/>
    </reaction>
</comment>
<comment type="cofactor">
    <cofactor evidence="1">
        <name>[4Fe-4S] cluster</name>
        <dbReference type="ChEBI" id="CHEBI:49883"/>
    </cofactor>
    <text evidence="1">Binds 2 [4Fe-4S] clusters. Binds 1 [4Fe-4S] cluster coordinated with 3 cysteines and an exchangeable S-adenosyl-L-methionine and 1 [4Fe-4S] cluster coordinated with 3 cysteines and the GTP-derived substrate.</text>
</comment>
<comment type="pathway">
    <text evidence="1">Cofactor biosynthesis; molybdopterin biosynthesis.</text>
</comment>
<comment type="subunit">
    <text evidence="1">Monomer and homodimer.</text>
</comment>
<comment type="similarity">
    <text evidence="1">Belongs to the radical SAM superfamily. MoaA family.</text>
</comment>
<organism>
    <name type="scientific">Photorhabdus laumondii subsp. laumondii (strain DSM 15139 / CIP 105565 / TT01)</name>
    <name type="common">Photorhabdus luminescens subsp. laumondii</name>
    <dbReference type="NCBI Taxonomy" id="243265"/>
    <lineage>
        <taxon>Bacteria</taxon>
        <taxon>Pseudomonadati</taxon>
        <taxon>Pseudomonadota</taxon>
        <taxon>Gammaproteobacteria</taxon>
        <taxon>Enterobacterales</taxon>
        <taxon>Morganellaceae</taxon>
        <taxon>Photorhabdus</taxon>
    </lineage>
</organism>
<dbReference type="EC" id="4.1.99.22" evidence="1"/>
<dbReference type="EMBL" id="BX571864">
    <property type="protein sequence ID" value="CAE13792.1"/>
    <property type="molecule type" value="Genomic_DNA"/>
</dbReference>
<dbReference type="RefSeq" id="WP_011145800.1">
    <property type="nucleotide sequence ID" value="NC_005126.1"/>
</dbReference>
<dbReference type="SMR" id="Q7N6P6"/>
<dbReference type="STRING" id="243265.plu1499"/>
<dbReference type="GeneID" id="48847790"/>
<dbReference type="KEGG" id="plu:plu1499"/>
<dbReference type="eggNOG" id="COG2896">
    <property type="taxonomic scope" value="Bacteria"/>
</dbReference>
<dbReference type="HOGENOM" id="CLU_009273_0_1_6"/>
<dbReference type="UniPathway" id="UPA00344"/>
<dbReference type="Proteomes" id="UP000002514">
    <property type="component" value="Chromosome"/>
</dbReference>
<dbReference type="GO" id="GO:0051539">
    <property type="term" value="F:4 iron, 4 sulfur cluster binding"/>
    <property type="evidence" value="ECO:0007669"/>
    <property type="project" value="UniProtKB-UniRule"/>
</dbReference>
<dbReference type="GO" id="GO:0061799">
    <property type="term" value="F:cyclic pyranopterin monophosphate synthase activity"/>
    <property type="evidence" value="ECO:0007669"/>
    <property type="project" value="TreeGrafter"/>
</dbReference>
<dbReference type="GO" id="GO:0061798">
    <property type="term" value="F:GTP 3',8'-cyclase activity"/>
    <property type="evidence" value="ECO:0007669"/>
    <property type="project" value="UniProtKB-UniRule"/>
</dbReference>
<dbReference type="GO" id="GO:0005525">
    <property type="term" value="F:GTP binding"/>
    <property type="evidence" value="ECO:0007669"/>
    <property type="project" value="UniProtKB-UniRule"/>
</dbReference>
<dbReference type="GO" id="GO:0046872">
    <property type="term" value="F:metal ion binding"/>
    <property type="evidence" value="ECO:0007669"/>
    <property type="project" value="UniProtKB-KW"/>
</dbReference>
<dbReference type="GO" id="GO:1904047">
    <property type="term" value="F:S-adenosyl-L-methionine binding"/>
    <property type="evidence" value="ECO:0007669"/>
    <property type="project" value="UniProtKB-UniRule"/>
</dbReference>
<dbReference type="GO" id="GO:0006777">
    <property type="term" value="P:Mo-molybdopterin cofactor biosynthetic process"/>
    <property type="evidence" value="ECO:0007669"/>
    <property type="project" value="UniProtKB-UniRule"/>
</dbReference>
<dbReference type="CDD" id="cd01335">
    <property type="entry name" value="Radical_SAM"/>
    <property type="match status" value="1"/>
</dbReference>
<dbReference type="CDD" id="cd21117">
    <property type="entry name" value="Twitch_MoaA"/>
    <property type="match status" value="1"/>
</dbReference>
<dbReference type="FunFam" id="3.20.20.70:FF:000057">
    <property type="entry name" value="GTP 3',8-cyclase"/>
    <property type="match status" value="1"/>
</dbReference>
<dbReference type="Gene3D" id="3.20.20.70">
    <property type="entry name" value="Aldolase class I"/>
    <property type="match status" value="1"/>
</dbReference>
<dbReference type="HAMAP" id="MF_01225_B">
    <property type="entry name" value="MoaA_B"/>
    <property type="match status" value="1"/>
</dbReference>
<dbReference type="InterPro" id="IPR013785">
    <property type="entry name" value="Aldolase_TIM"/>
</dbReference>
<dbReference type="InterPro" id="IPR006638">
    <property type="entry name" value="Elp3/MiaA/NifB-like_rSAM"/>
</dbReference>
<dbReference type="InterPro" id="IPR013483">
    <property type="entry name" value="MoaA"/>
</dbReference>
<dbReference type="InterPro" id="IPR000385">
    <property type="entry name" value="MoaA_NifB_PqqE_Fe-S-bd_CS"/>
</dbReference>
<dbReference type="InterPro" id="IPR010505">
    <property type="entry name" value="MoaA_twitch"/>
</dbReference>
<dbReference type="InterPro" id="IPR050105">
    <property type="entry name" value="MoCo_biosynth_MoaA/MoaC"/>
</dbReference>
<dbReference type="InterPro" id="IPR007197">
    <property type="entry name" value="rSAM"/>
</dbReference>
<dbReference type="NCBIfam" id="TIGR02666">
    <property type="entry name" value="moaA"/>
    <property type="match status" value="1"/>
</dbReference>
<dbReference type="PANTHER" id="PTHR22960:SF28">
    <property type="entry name" value="GTP 3',8-CYCLASE"/>
    <property type="match status" value="1"/>
</dbReference>
<dbReference type="PANTHER" id="PTHR22960">
    <property type="entry name" value="MOLYBDOPTERIN COFACTOR SYNTHESIS PROTEIN A"/>
    <property type="match status" value="1"/>
</dbReference>
<dbReference type="Pfam" id="PF13353">
    <property type="entry name" value="Fer4_12"/>
    <property type="match status" value="1"/>
</dbReference>
<dbReference type="Pfam" id="PF06463">
    <property type="entry name" value="Mob_synth_C"/>
    <property type="match status" value="1"/>
</dbReference>
<dbReference type="Pfam" id="PF04055">
    <property type="entry name" value="Radical_SAM"/>
    <property type="match status" value="1"/>
</dbReference>
<dbReference type="SFLD" id="SFLDG01383">
    <property type="entry name" value="cyclic_pyranopterin_phosphate"/>
    <property type="match status" value="1"/>
</dbReference>
<dbReference type="SFLD" id="SFLDS00029">
    <property type="entry name" value="Radical_SAM"/>
    <property type="match status" value="1"/>
</dbReference>
<dbReference type="SMART" id="SM00729">
    <property type="entry name" value="Elp3"/>
    <property type="match status" value="1"/>
</dbReference>
<dbReference type="SUPFAM" id="SSF102114">
    <property type="entry name" value="Radical SAM enzymes"/>
    <property type="match status" value="1"/>
</dbReference>
<dbReference type="PROSITE" id="PS01305">
    <property type="entry name" value="MOAA_NIFB_PQQE"/>
    <property type="match status" value="1"/>
</dbReference>
<dbReference type="PROSITE" id="PS51918">
    <property type="entry name" value="RADICAL_SAM"/>
    <property type="match status" value="1"/>
</dbReference>
<proteinExistence type="inferred from homology"/>
<gene>
    <name evidence="1" type="primary">moaA</name>
    <name type="ordered locus">plu1499</name>
</gene>
<evidence type="ECO:0000255" key="1">
    <source>
        <dbReference type="HAMAP-Rule" id="MF_01225"/>
    </source>
</evidence>
<evidence type="ECO:0000255" key="2">
    <source>
        <dbReference type="PROSITE-ProRule" id="PRU01266"/>
    </source>
</evidence>